<accession>Q5HS92</accession>
<gene>
    <name evidence="1" type="primary">rplW</name>
    <name type="ordered locus">CJE1873</name>
</gene>
<proteinExistence type="inferred from homology"/>
<organism>
    <name type="scientific">Campylobacter jejuni (strain RM1221)</name>
    <dbReference type="NCBI Taxonomy" id="195099"/>
    <lineage>
        <taxon>Bacteria</taxon>
        <taxon>Pseudomonadati</taxon>
        <taxon>Campylobacterota</taxon>
        <taxon>Epsilonproteobacteria</taxon>
        <taxon>Campylobacterales</taxon>
        <taxon>Campylobacteraceae</taxon>
        <taxon>Campylobacter</taxon>
    </lineage>
</organism>
<evidence type="ECO:0000255" key="1">
    <source>
        <dbReference type="HAMAP-Rule" id="MF_01369"/>
    </source>
</evidence>
<evidence type="ECO:0000305" key="2"/>
<feature type="chain" id="PRO_1000068056" description="Large ribosomal subunit protein uL23">
    <location>
        <begin position="1"/>
        <end position="93"/>
    </location>
</feature>
<reference key="1">
    <citation type="journal article" date="2005" name="PLoS Biol.">
        <title>Major structural differences and novel potential virulence mechanisms from the genomes of multiple Campylobacter species.</title>
        <authorList>
            <person name="Fouts D.E."/>
            <person name="Mongodin E.F."/>
            <person name="Mandrell R.E."/>
            <person name="Miller W.G."/>
            <person name="Rasko D.A."/>
            <person name="Ravel J."/>
            <person name="Brinkac L.M."/>
            <person name="DeBoy R.T."/>
            <person name="Parker C.T."/>
            <person name="Daugherty S.C."/>
            <person name="Dodson R.J."/>
            <person name="Durkin A.S."/>
            <person name="Madupu R."/>
            <person name="Sullivan S.A."/>
            <person name="Shetty J.U."/>
            <person name="Ayodeji M.A."/>
            <person name="Shvartsbeyn A."/>
            <person name="Schatz M.C."/>
            <person name="Badger J.H."/>
            <person name="Fraser C.M."/>
            <person name="Nelson K.E."/>
        </authorList>
    </citation>
    <scope>NUCLEOTIDE SEQUENCE [LARGE SCALE GENOMIC DNA]</scope>
    <source>
        <strain>RM1221</strain>
    </source>
</reference>
<keyword id="KW-0687">Ribonucleoprotein</keyword>
<keyword id="KW-0689">Ribosomal protein</keyword>
<keyword id="KW-0694">RNA-binding</keyword>
<keyword id="KW-0699">rRNA-binding</keyword>
<dbReference type="EMBL" id="CP000025">
    <property type="protein sequence ID" value="AAW36295.1"/>
    <property type="molecule type" value="Genomic_DNA"/>
</dbReference>
<dbReference type="PIR" id="E81268">
    <property type="entry name" value="E81268"/>
</dbReference>
<dbReference type="RefSeq" id="WP_002851441.1">
    <property type="nucleotide sequence ID" value="NC_003912.7"/>
</dbReference>
<dbReference type="SMR" id="Q5HS92"/>
<dbReference type="KEGG" id="cjr:CJE1873"/>
<dbReference type="HOGENOM" id="CLU_037562_3_1_7"/>
<dbReference type="GO" id="GO:1990904">
    <property type="term" value="C:ribonucleoprotein complex"/>
    <property type="evidence" value="ECO:0007669"/>
    <property type="project" value="UniProtKB-KW"/>
</dbReference>
<dbReference type="GO" id="GO:0005840">
    <property type="term" value="C:ribosome"/>
    <property type="evidence" value="ECO:0007669"/>
    <property type="project" value="UniProtKB-KW"/>
</dbReference>
<dbReference type="GO" id="GO:0019843">
    <property type="term" value="F:rRNA binding"/>
    <property type="evidence" value="ECO:0007669"/>
    <property type="project" value="UniProtKB-UniRule"/>
</dbReference>
<dbReference type="GO" id="GO:0003735">
    <property type="term" value="F:structural constituent of ribosome"/>
    <property type="evidence" value="ECO:0007669"/>
    <property type="project" value="InterPro"/>
</dbReference>
<dbReference type="GO" id="GO:0006412">
    <property type="term" value="P:translation"/>
    <property type="evidence" value="ECO:0007669"/>
    <property type="project" value="UniProtKB-UniRule"/>
</dbReference>
<dbReference type="Gene3D" id="3.30.70.330">
    <property type="match status" value="1"/>
</dbReference>
<dbReference type="HAMAP" id="MF_01369_B">
    <property type="entry name" value="Ribosomal_uL23_B"/>
    <property type="match status" value="1"/>
</dbReference>
<dbReference type="InterPro" id="IPR012677">
    <property type="entry name" value="Nucleotide-bd_a/b_plait_sf"/>
</dbReference>
<dbReference type="InterPro" id="IPR013025">
    <property type="entry name" value="Ribosomal_uL23-like"/>
</dbReference>
<dbReference type="InterPro" id="IPR012678">
    <property type="entry name" value="Ribosomal_uL23/eL15/eS24_sf"/>
</dbReference>
<dbReference type="NCBIfam" id="NF004362">
    <property type="entry name" value="PRK05738.2-2"/>
    <property type="match status" value="1"/>
</dbReference>
<dbReference type="Pfam" id="PF00276">
    <property type="entry name" value="Ribosomal_L23"/>
    <property type="match status" value="1"/>
</dbReference>
<dbReference type="SUPFAM" id="SSF54189">
    <property type="entry name" value="Ribosomal proteins S24e, L23 and L15e"/>
    <property type="match status" value="1"/>
</dbReference>
<comment type="function">
    <text evidence="1">One of the early assembly proteins it binds 23S rRNA. One of the proteins that surrounds the polypeptide exit tunnel on the outside of the ribosome. Forms the main docking site for trigger factor binding to the ribosome.</text>
</comment>
<comment type="subunit">
    <text evidence="1">Part of the 50S ribosomal subunit. Contacts protein L29, and trigger factor when it is bound to the ribosome.</text>
</comment>
<comment type="similarity">
    <text evidence="1">Belongs to the universal ribosomal protein uL23 family.</text>
</comment>
<sequence length="93" mass="10567">MADITDIKTILYTEKSLNLQEQGVVVIQTSPKMTKTGLKAVLKEYFGVTPKSINSLRMDGKIKRFRGRLGQRNNYKKFYVKLPEGVSLENTEA</sequence>
<name>RL23_CAMJR</name>
<protein>
    <recommendedName>
        <fullName evidence="1">Large ribosomal subunit protein uL23</fullName>
    </recommendedName>
    <alternativeName>
        <fullName evidence="2">50S ribosomal protein L23</fullName>
    </alternativeName>
</protein>